<feature type="chain" id="PRO_0000162380" description="Trans-2,3-dihydro-3-hydroxyanthranilate isomerase">
    <location>
        <begin position="1"/>
        <end position="278"/>
    </location>
</feature>
<feature type="active site" evidence="1">
    <location>
        <position position="45"/>
    </location>
</feature>
<reference key="1">
    <citation type="submission" date="1998-10" db="EMBL/GenBank/DDBJ databases">
        <title>New genes involved in pyocyanine biosynthesis in Pseudomonas aeruginosa PAO1.</title>
        <authorList>
            <person name="Mavrodi D.V."/>
            <person name="Delaney S.M."/>
            <person name="Thomashow L.S."/>
        </authorList>
    </citation>
    <scope>NUCLEOTIDE SEQUENCE [GENOMIC DNA]</scope>
    <source>
        <strain>ATCC 15692 / DSM 22644 / CIP 104116 / JCM 14847 / LMG 12228 / 1C / PRS 101 / PAO1</strain>
    </source>
</reference>
<reference key="2">
    <citation type="journal article" date="2000" name="Nature">
        <title>Complete genome sequence of Pseudomonas aeruginosa PAO1, an opportunistic pathogen.</title>
        <authorList>
            <person name="Stover C.K."/>
            <person name="Pham X.-Q.T."/>
            <person name="Erwin A.L."/>
            <person name="Mizoguchi S.D."/>
            <person name="Warrener P."/>
            <person name="Hickey M.J."/>
            <person name="Brinkman F.S.L."/>
            <person name="Hufnagle W.O."/>
            <person name="Kowalik D.J."/>
            <person name="Lagrou M."/>
            <person name="Garber R.L."/>
            <person name="Goltry L."/>
            <person name="Tolentino E."/>
            <person name="Westbrock-Wadman S."/>
            <person name="Yuan Y."/>
            <person name="Brody L.L."/>
            <person name="Coulter S.N."/>
            <person name="Folger K.R."/>
            <person name="Kas A."/>
            <person name="Larbig K."/>
            <person name="Lim R.M."/>
            <person name="Smith K.A."/>
            <person name="Spencer D.H."/>
            <person name="Wong G.K.-S."/>
            <person name="Wu Z."/>
            <person name="Paulsen I.T."/>
            <person name="Reizer J."/>
            <person name="Saier M.H. Jr."/>
            <person name="Hancock R.E.W."/>
            <person name="Lory S."/>
            <person name="Olson M.V."/>
        </authorList>
    </citation>
    <scope>NUCLEOTIDE SEQUENCE [LARGE SCALE GENOMIC DNA]</scope>
    <source>
        <strain>ATCC 15692 / DSM 22644 / CIP 104116 / JCM 14847 / LMG 12228 / 1C / PRS 101 / PAO1</strain>
    </source>
</reference>
<evidence type="ECO:0000250" key="1"/>
<evidence type="ECO:0000250" key="2">
    <source>
        <dbReference type="UniProtKB" id="Q51792"/>
    </source>
</evidence>
<evidence type="ECO:0000305" key="3"/>
<dbReference type="EC" id="5.3.3.17" evidence="2"/>
<dbReference type="EMBL" id="AF005404">
    <property type="protein sequence ID" value="AAC64492.1"/>
    <property type="molecule type" value="Genomic_DNA"/>
</dbReference>
<dbReference type="EMBL" id="AE004091">
    <property type="protein sequence ID" value="AAG05293.1"/>
    <property type="molecule type" value="Genomic_DNA"/>
</dbReference>
<dbReference type="EMBL" id="AE004091">
    <property type="protein sequence ID" value="AAG07602.1"/>
    <property type="molecule type" value="Genomic_DNA"/>
</dbReference>
<dbReference type="PIR" id="B83119">
    <property type="entry name" value="B83119"/>
</dbReference>
<dbReference type="RefSeq" id="NP_250595.1">
    <property type="nucleotide sequence ID" value="NC_002516.2"/>
</dbReference>
<dbReference type="RefSeq" id="NP_252904.1">
    <property type="nucleotide sequence ID" value="NC_002516.2"/>
</dbReference>
<dbReference type="RefSeq" id="WP_003093628.1">
    <property type="nucleotide sequence ID" value="NZ_QZGE01000046.1"/>
</dbReference>
<dbReference type="PDB" id="9F92">
    <property type="method" value="X-ray"/>
    <property type="resolution" value="1.32 A"/>
    <property type="chains" value="A=1-278"/>
</dbReference>
<dbReference type="PDB" id="9F93">
    <property type="method" value="X-ray"/>
    <property type="resolution" value="1.54 A"/>
    <property type="chains" value="A=1-278"/>
</dbReference>
<dbReference type="PDB" id="9F94">
    <property type="method" value="X-ray"/>
    <property type="resolution" value="1.32 A"/>
    <property type="chains" value="A=1-278"/>
</dbReference>
<dbReference type="PDB" id="9F95">
    <property type="method" value="X-ray"/>
    <property type="resolution" value="1.46 A"/>
    <property type="chains" value="A=1-278"/>
</dbReference>
<dbReference type="PDB" id="9F96">
    <property type="method" value="X-ray"/>
    <property type="resolution" value="1.27 A"/>
    <property type="chains" value="A=1-278"/>
</dbReference>
<dbReference type="PDBsum" id="9F92"/>
<dbReference type="PDBsum" id="9F93"/>
<dbReference type="PDBsum" id="9F94"/>
<dbReference type="PDBsum" id="9F95"/>
<dbReference type="PDBsum" id="9F96"/>
<dbReference type="SMR" id="O69754"/>
<dbReference type="FunCoup" id="O69754">
    <property type="interactions" value="527"/>
</dbReference>
<dbReference type="STRING" id="208964.PA1904"/>
<dbReference type="PaxDb" id="208964-PA1904"/>
<dbReference type="DNASU" id="879183"/>
<dbReference type="GeneID" id="879183"/>
<dbReference type="GeneID" id="880481"/>
<dbReference type="KEGG" id="pae:PA1904"/>
<dbReference type="KEGG" id="pae:PA4215"/>
<dbReference type="PATRIC" id="fig|208964.12.peg.1982"/>
<dbReference type="PseudoCAP" id="PA4215"/>
<dbReference type="HOGENOM" id="CLU_048756_0_1_6"/>
<dbReference type="InParanoid" id="O69754"/>
<dbReference type="OrthoDB" id="9788221at2"/>
<dbReference type="PhylomeDB" id="O69754"/>
<dbReference type="UniPathway" id="UPA00235"/>
<dbReference type="Proteomes" id="UP000002438">
    <property type="component" value="Chromosome"/>
</dbReference>
<dbReference type="GO" id="GO:0005737">
    <property type="term" value="C:cytoplasm"/>
    <property type="evidence" value="ECO:0000318"/>
    <property type="project" value="GO_Central"/>
</dbReference>
<dbReference type="GO" id="GO:0016853">
    <property type="term" value="F:isomerase activity"/>
    <property type="evidence" value="ECO:0000318"/>
    <property type="project" value="GO_Central"/>
</dbReference>
<dbReference type="GO" id="GO:0102943">
    <property type="term" value="F:trans-2,3-dihydro-3-hydroxy-anthranilate isomerase activity"/>
    <property type="evidence" value="ECO:0007669"/>
    <property type="project" value="UniProtKB-EC"/>
</dbReference>
<dbReference type="GO" id="GO:0002047">
    <property type="term" value="P:phenazine biosynthetic process"/>
    <property type="evidence" value="ECO:0000314"/>
    <property type="project" value="PseudoCAP"/>
</dbReference>
<dbReference type="Gene3D" id="3.10.310.10">
    <property type="entry name" value="Diaminopimelate Epimerase, Chain A, domain 1"/>
    <property type="match status" value="2"/>
</dbReference>
<dbReference type="InterPro" id="IPR003719">
    <property type="entry name" value="Phenazine_PhzF-like"/>
</dbReference>
<dbReference type="NCBIfam" id="TIGR00654">
    <property type="entry name" value="PhzF_family"/>
    <property type="match status" value="1"/>
</dbReference>
<dbReference type="PANTHER" id="PTHR13774:SF32">
    <property type="entry name" value="ANTISENSE-ENHANCING SEQUENCE 1"/>
    <property type="match status" value="1"/>
</dbReference>
<dbReference type="PANTHER" id="PTHR13774">
    <property type="entry name" value="PHENAZINE BIOSYNTHESIS PROTEIN"/>
    <property type="match status" value="1"/>
</dbReference>
<dbReference type="Pfam" id="PF02567">
    <property type="entry name" value="PhzC-PhzF"/>
    <property type="match status" value="1"/>
</dbReference>
<dbReference type="PIRSF" id="PIRSF016184">
    <property type="entry name" value="PhzC_PhzF"/>
    <property type="match status" value="1"/>
</dbReference>
<dbReference type="SUPFAM" id="SSF54506">
    <property type="entry name" value="Diaminopimelate epimerase-like"/>
    <property type="match status" value="1"/>
</dbReference>
<sequence length="278" mass="30343">MHRYVVIDAFASEPLQGNPVAVFFDCDDLSGERMQRMAREMNLSESTFVLRPQQDGDARIRIFTPVNELPFAGHPLLGTAIALGAETDKDRLFLETRMGTVPFALERQDGKVVACSMQQPIPTWEHFSRPAELLAALGLKGSTFPIEVYRNGPRHVFVGLESVAALSALHPDHRALCDFPDLAVNCFAGAGRHWRSRMFSPAYGVVEDAATGSAAGPLAIHLARHRQIPYGQQIEILQGVEIGRPSRMYARAEGAGERVSAVEVSGNGAAFAEGRAYL</sequence>
<accession>O69754</accession>
<name>PHZF_PSEAE</name>
<gene>
    <name type="primary">phzF1</name>
    <name type="synonym">phzF</name>
    <name type="ordered locus">PA1904</name>
</gene>
<gene>
    <name type="primary">phzF2</name>
    <name type="ordered locus">PA4215</name>
</gene>
<comment type="function">
    <text evidence="2">Isomerase that catalyzes the condensation of two molecules of trans-2,3-dihydro-3-hydroxyanthranilic acid (DHHA) into the phenazine ring system. The final product is not yet known.</text>
</comment>
<comment type="catalytic activity">
    <reaction evidence="2">
        <text>(5S,6S)-6-amino-5-hydroxycyclohexa-1,3-diene-1-carboxyate = (1R,6S)-6-amino-5-oxocyclohex-2-ene-1-carboxylate</text>
        <dbReference type="Rhea" id="RHEA:28182"/>
        <dbReference type="ChEBI" id="CHEBI:60849"/>
        <dbReference type="ChEBI" id="CHEBI:60862"/>
        <dbReference type="EC" id="5.3.3.17"/>
    </reaction>
</comment>
<comment type="pathway">
    <text>Secondary metabolite biosynthesis; pyocyanine biosynthesis.</text>
</comment>
<comment type="similarity">
    <text evidence="3">Belongs to the PhzF family.</text>
</comment>
<organism>
    <name type="scientific">Pseudomonas aeruginosa (strain ATCC 15692 / DSM 22644 / CIP 104116 / JCM 14847 / LMG 12228 / 1C / PRS 101 / PAO1)</name>
    <dbReference type="NCBI Taxonomy" id="208964"/>
    <lineage>
        <taxon>Bacteria</taxon>
        <taxon>Pseudomonadati</taxon>
        <taxon>Pseudomonadota</taxon>
        <taxon>Gammaproteobacteria</taxon>
        <taxon>Pseudomonadales</taxon>
        <taxon>Pseudomonadaceae</taxon>
        <taxon>Pseudomonas</taxon>
    </lineage>
</organism>
<protein>
    <recommendedName>
        <fullName>Trans-2,3-dihydro-3-hydroxyanthranilate isomerase</fullName>
        <ecNumber evidence="2">5.3.3.17</ecNumber>
    </recommendedName>
    <alternativeName>
        <fullName>Phenazine/pyocyanine biosynthesis protein PhzF</fullName>
    </alternativeName>
</protein>
<keyword id="KW-0002">3D-structure</keyword>
<keyword id="KW-0045">Antibiotic biosynthesis</keyword>
<keyword id="KW-0413">Isomerase</keyword>
<keyword id="KW-1185">Reference proteome</keyword>
<proteinExistence type="evidence at protein level"/>